<evidence type="ECO:0000255" key="1">
    <source>
        <dbReference type="HAMAP-Rule" id="MF_00823"/>
    </source>
</evidence>
<evidence type="ECO:0000255" key="2">
    <source>
        <dbReference type="PROSITE-ProRule" id="PRU01137"/>
    </source>
</evidence>
<name>ACCA_PARM1</name>
<gene>
    <name evidence="1" type="primary">accA</name>
    <name type="ordered locus">amb4204</name>
</gene>
<sequence length="317" mass="34559">MHILEFEKPIAELEGKIEELRHLSDGGDVNIADEVSKLQAKVDKLLRSTYAKLTPWQKTQVARHPERPHTLAYISTLIEDFTPLAGDRAFAEDEAIIGGLGRFRGRSVMIIGHEKGHDTETRLKHNFGMAKPEGYRKAKRLMEMADHFQVPIITLVDTAGAYPGVDAEARGQAEAIARSIETCLNVRVPLVSVIIGEGGSGGAIALATGNTVLMLEHAIYSVISPEGCASILWRSAENAKDAAEQLRLTAQDLHKLSIIDSVVPEPMGGAHRNPDLMMQTLSMALDSALRDLSGLDGGVLRARRREKFLEMGRAGLS</sequence>
<proteinExistence type="inferred from homology"/>
<feature type="chain" id="PRO_1000062636" description="Acetyl-coenzyme A carboxylase carboxyl transferase subunit alpha">
    <location>
        <begin position="1"/>
        <end position="317"/>
    </location>
</feature>
<feature type="domain" description="CoA carboxyltransferase C-terminal" evidence="2">
    <location>
        <begin position="41"/>
        <end position="291"/>
    </location>
</feature>
<protein>
    <recommendedName>
        <fullName evidence="1">Acetyl-coenzyme A carboxylase carboxyl transferase subunit alpha</fullName>
        <shortName evidence="1">ACCase subunit alpha</shortName>
        <shortName evidence="1">Acetyl-CoA carboxylase carboxyltransferase subunit alpha</shortName>
        <ecNumber evidence="1">2.1.3.15</ecNumber>
    </recommendedName>
</protein>
<reference key="1">
    <citation type="journal article" date="2005" name="DNA Res.">
        <title>Complete genome sequence of the facultative anaerobic magnetotactic bacterium Magnetospirillum sp. strain AMB-1.</title>
        <authorList>
            <person name="Matsunaga T."/>
            <person name="Okamura Y."/>
            <person name="Fukuda Y."/>
            <person name="Wahyudi A.T."/>
            <person name="Murase Y."/>
            <person name="Takeyama H."/>
        </authorList>
    </citation>
    <scope>NUCLEOTIDE SEQUENCE [LARGE SCALE GENOMIC DNA]</scope>
    <source>
        <strain>ATCC 700264 / AMB-1</strain>
    </source>
</reference>
<dbReference type="EC" id="2.1.3.15" evidence="1"/>
<dbReference type="EMBL" id="AP007255">
    <property type="protein sequence ID" value="BAE53008.1"/>
    <property type="molecule type" value="Genomic_DNA"/>
</dbReference>
<dbReference type="RefSeq" id="WP_011386553.1">
    <property type="nucleotide sequence ID" value="NC_007626.1"/>
</dbReference>
<dbReference type="SMR" id="Q2VZG7"/>
<dbReference type="STRING" id="342108.amb4204"/>
<dbReference type="KEGG" id="mag:amb4204"/>
<dbReference type="HOGENOM" id="CLU_015486_0_2_5"/>
<dbReference type="OrthoDB" id="9808023at2"/>
<dbReference type="UniPathway" id="UPA00655">
    <property type="reaction ID" value="UER00711"/>
</dbReference>
<dbReference type="Proteomes" id="UP000007058">
    <property type="component" value="Chromosome"/>
</dbReference>
<dbReference type="GO" id="GO:0009317">
    <property type="term" value="C:acetyl-CoA carboxylase complex"/>
    <property type="evidence" value="ECO:0007669"/>
    <property type="project" value="InterPro"/>
</dbReference>
<dbReference type="GO" id="GO:0003989">
    <property type="term" value="F:acetyl-CoA carboxylase activity"/>
    <property type="evidence" value="ECO:0007669"/>
    <property type="project" value="InterPro"/>
</dbReference>
<dbReference type="GO" id="GO:0005524">
    <property type="term" value="F:ATP binding"/>
    <property type="evidence" value="ECO:0007669"/>
    <property type="project" value="UniProtKB-KW"/>
</dbReference>
<dbReference type="GO" id="GO:0016743">
    <property type="term" value="F:carboxyl- or carbamoyltransferase activity"/>
    <property type="evidence" value="ECO:0007669"/>
    <property type="project" value="UniProtKB-UniRule"/>
</dbReference>
<dbReference type="GO" id="GO:0006633">
    <property type="term" value="P:fatty acid biosynthetic process"/>
    <property type="evidence" value="ECO:0007669"/>
    <property type="project" value="UniProtKB-KW"/>
</dbReference>
<dbReference type="GO" id="GO:2001295">
    <property type="term" value="P:malonyl-CoA biosynthetic process"/>
    <property type="evidence" value="ECO:0007669"/>
    <property type="project" value="UniProtKB-UniRule"/>
</dbReference>
<dbReference type="Gene3D" id="3.90.226.10">
    <property type="entry name" value="2-enoyl-CoA Hydratase, Chain A, domain 1"/>
    <property type="match status" value="1"/>
</dbReference>
<dbReference type="HAMAP" id="MF_00823">
    <property type="entry name" value="AcetylCoA_CT_alpha"/>
    <property type="match status" value="1"/>
</dbReference>
<dbReference type="InterPro" id="IPR001095">
    <property type="entry name" value="Acetyl_CoA_COase_a_su"/>
</dbReference>
<dbReference type="InterPro" id="IPR029045">
    <property type="entry name" value="ClpP/crotonase-like_dom_sf"/>
</dbReference>
<dbReference type="InterPro" id="IPR011763">
    <property type="entry name" value="COA_CT_C"/>
</dbReference>
<dbReference type="NCBIfam" id="TIGR00513">
    <property type="entry name" value="accA"/>
    <property type="match status" value="1"/>
</dbReference>
<dbReference type="NCBIfam" id="NF041504">
    <property type="entry name" value="AccA_sub"/>
    <property type="match status" value="1"/>
</dbReference>
<dbReference type="NCBIfam" id="NF004344">
    <property type="entry name" value="PRK05724.1"/>
    <property type="match status" value="1"/>
</dbReference>
<dbReference type="PANTHER" id="PTHR42853">
    <property type="entry name" value="ACETYL-COENZYME A CARBOXYLASE CARBOXYL TRANSFERASE SUBUNIT ALPHA"/>
    <property type="match status" value="1"/>
</dbReference>
<dbReference type="PANTHER" id="PTHR42853:SF3">
    <property type="entry name" value="ACETYL-COENZYME A CARBOXYLASE CARBOXYL TRANSFERASE SUBUNIT ALPHA, CHLOROPLASTIC"/>
    <property type="match status" value="1"/>
</dbReference>
<dbReference type="Pfam" id="PF03255">
    <property type="entry name" value="ACCA"/>
    <property type="match status" value="1"/>
</dbReference>
<dbReference type="PRINTS" id="PR01069">
    <property type="entry name" value="ACCCTRFRASEA"/>
</dbReference>
<dbReference type="SUPFAM" id="SSF52096">
    <property type="entry name" value="ClpP/crotonase"/>
    <property type="match status" value="1"/>
</dbReference>
<dbReference type="PROSITE" id="PS50989">
    <property type="entry name" value="COA_CT_CTER"/>
    <property type="match status" value="1"/>
</dbReference>
<keyword id="KW-0067">ATP-binding</keyword>
<keyword id="KW-0963">Cytoplasm</keyword>
<keyword id="KW-0275">Fatty acid biosynthesis</keyword>
<keyword id="KW-0276">Fatty acid metabolism</keyword>
<keyword id="KW-0444">Lipid biosynthesis</keyword>
<keyword id="KW-0443">Lipid metabolism</keyword>
<keyword id="KW-0547">Nucleotide-binding</keyword>
<keyword id="KW-0808">Transferase</keyword>
<accession>Q2VZG7</accession>
<organism>
    <name type="scientific">Paramagnetospirillum magneticum (strain ATCC 700264 / AMB-1)</name>
    <name type="common">Magnetospirillum magneticum</name>
    <dbReference type="NCBI Taxonomy" id="342108"/>
    <lineage>
        <taxon>Bacteria</taxon>
        <taxon>Pseudomonadati</taxon>
        <taxon>Pseudomonadota</taxon>
        <taxon>Alphaproteobacteria</taxon>
        <taxon>Rhodospirillales</taxon>
        <taxon>Magnetospirillaceae</taxon>
        <taxon>Paramagnetospirillum</taxon>
    </lineage>
</organism>
<comment type="function">
    <text evidence="1">Component of the acetyl coenzyme A carboxylase (ACC) complex. First, biotin carboxylase catalyzes the carboxylation of biotin on its carrier protein (BCCP) and then the CO(2) group is transferred by the carboxyltransferase to acetyl-CoA to form malonyl-CoA.</text>
</comment>
<comment type="catalytic activity">
    <reaction evidence="1">
        <text>N(6)-carboxybiotinyl-L-lysyl-[protein] + acetyl-CoA = N(6)-biotinyl-L-lysyl-[protein] + malonyl-CoA</text>
        <dbReference type="Rhea" id="RHEA:54728"/>
        <dbReference type="Rhea" id="RHEA-COMP:10505"/>
        <dbReference type="Rhea" id="RHEA-COMP:10506"/>
        <dbReference type="ChEBI" id="CHEBI:57288"/>
        <dbReference type="ChEBI" id="CHEBI:57384"/>
        <dbReference type="ChEBI" id="CHEBI:83144"/>
        <dbReference type="ChEBI" id="CHEBI:83145"/>
        <dbReference type="EC" id="2.1.3.15"/>
    </reaction>
</comment>
<comment type="pathway">
    <text evidence="1">Lipid metabolism; malonyl-CoA biosynthesis; malonyl-CoA from acetyl-CoA: step 1/1.</text>
</comment>
<comment type="subunit">
    <text evidence="1">Acetyl-CoA carboxylase is a heterohexamer composed of biotin carboxyl carrier protein (AccB), biotin carboxylase (AccC) and two subunits each of ACCase subunit alpha (AccA) and ACCase subunit beta (AccD).</text>
</comment>
<comment type="subcellular location">
    <subcellularLocation>
        <location evidence="1">Cytoplasm</location>
    </subcellularLocation>
</comment>
<comment type="similarity">
    <text evidence="1">Belongs to the AccA family.</text>
</comment>